<evidence type="ECO:0000255" key="1">
    <source>
        <dbReference type="HAMAP-Rule" id="MF_00087"/>
    </source>
</evidence>
<name>HEM1_CHLCH</name>
<protein>
    <recommendedName>
        <fullName evidence="1">Glutamyl-tRNA reductase</fullName>
        <shortName evidence="1">GluTR</shortName>
        <ecNumber evidence="1">1.2.1.70</ecNumber>
    </recommendedName>
</protein>
<reference key="1">
    <citation type="submission" date="2005-08" db="EMBL/GenBank/DDBJ databases">
        <title>Complete sequence of Chlorobium chlorochromatii CaD3.</title>
        <authorList>
            <consortium name="US DOE Joint Genome Institute"/>
            <person name="Copeland A."/>
            <person name="Lucas S."/>
            <person name="Lapidus A."/>
            <person name="Barry K."/>
            <person name="Detter J.C."/>
            <person name="Glavina T."/>
            <person name="Hammon N."/>
            <person name="Israni S."/>
            <person name="Pitluck S."/>
            <person name="Bryant D."/>
            <person name="Schmutz J."/>
            <person name="Larimer F."/>
            <person name="Land M."/>
            <person name="Kyrpides N."/>
            <person name="Ivanova N."/>
            <person name="Richardson P."/>
        </authorList>
    </citation>
    <scope>NUCLEOTIDE SEQUENCE [LARGE SCALE GENOMIC DNA]</scope>
    <source>
        <strain>CaD3</strain>
    </source>
</reference>
<comment type="function">
    <text evidence="1">Catalyzes the NADPH-dependent reduction of glutamyl-tRNA(Glu) to glutamate 1-semialdehyde (GSA).</text>
</comment>
<comment type="catalytic activity">
    <reaction evidence="1">
        <text>(S)-4-amino-5-oxopentanoate + tRNA(Glu) + NADP(+) = L-glutamyl-tRNA(Glu) + NADPH + H(+)</text>
        <dbReference type="Rhea" id="RHEA:12344"/>
        <dbReference type="Rhea" id="RHEA-COMP:9663"/>
        <dbReference type="Rhea" id="RHEA-COMP:9680"/>
        <dbReference type="ChEBI" id="CHEBI:15378"/>
        <dbReference type="ChEBI" id="CHEBI:57501"/>
        <dbReference type="ChEBI" id="CHEBI:57783"/>
        <dbReference type="ChEBI" id="CHEBI:58349"/>
        <dbReference type="ChEBI" id="CHEBI:78442"/>
        <dbReference type="ChEBI" id="CHEBI:78520"/>
        <dbReference type="EC" id="1.2.1.70"/>
    </reaction>
</comment>
<comment type="pathway">
    <text evidence="1">Porphyrin-containing compound metabolism; protoporphyrin-IX biosynthesis; 5-aminolevulinate from L-glutamyl-tRNA(Glu): step 1/2.</text>
</comment>
<comment type="pathway">
    <text evidence="1">Porphyrin-containing compound metabolism; chlorophyll biosynthesis.</text>
</comment>
<comment type="subunit">
    <text evidence="1">Homodimer.</text>
</comment>
<comment type="domain">
    <text evidence="1">Possesses an unusual extended V-shaped dimeric structure with each monomer consisting of three distinct domains arranged along a curved 'spinal' alpha-helix. The N-terminal catalytic domain specifically recognizes the glutamate moiety of the substrate. The second domain is the NADPH-binding domain, and the third C-terminal domain is responsible for dimerization.</text>
</comment>
<comment type="miscellaneous">
    <text evidence="1">During catalysis, the active site Cys acts as a nucleophile attacking the alpha-carbonyl group of tRNA-bound glutamate with the formation of a thioester intermediate between enzyme and glutamate, and the concomitant release of tRNA(Glu). The thioester intermediate is finally reduced by direct hydride transfer from NADPH, to form the product GSA.</text>
</comment>
<comment type="similarity">
    <text evidence="1">Belongs to the glutamyl-tRNA reductase family.</text>
</comment>
<dbReference type="EC" id="1.2.1.70" evidence="1"/>
<dbReference type="EMBL" id="CP000108">
    <property type="protein sequence ID" value="ABB28771.1"/>
    <property type="molecule type" value="Genomic_DNA"/>
</dbReference>
<dbReference type="SMR" id="Q3AQF4"/>
<dbReference type="STRING" id="340177.Cag_1516"/>
<dbReference type="KEGG" id="cch:Cag_1516"/>
<dbReference type="eggNOG" id="COG0373">
    <property type="taxonomic scope" value="Bacteria"/>
</dbReference>
<dbReference type="HOGENOM" id="CLU_035113_2_2_10"/>
<dbReference type="OrthoDB" id="110209at2"/>
<dbReference type="UniPathway" id="UPA00251">
    <property type="reaction ID" value="UER00316"/>
</dbReference>
<dbReference type="UniPathway" id="UPA00668"/>
<dbReference type="GO" id="GO:0008883">
    <property type="term" value="F:glutamyl-tRNA reductase activity"/>
    <property type="evidence" value="ECO:0007669"/>
    <property type="project" value="UniProtKB-UniRule"/>
</dbReference>
<dbReference type="GO" id="GO:0050661">
    <property type="term" value="F:NADP binding"/>
    <property type="evidence" value="ECO:0007669"/>
    <property type="project" value="InterPro"/>
</dbReference>
<dbReference type="GO" id="GO:0015995">
    <property type="term" value="P:chlorophyll biosynthetic process"/>
    <property type="evidence" value="ECO:0007669"/>
    <property type="project" value="UniProtKB-UniPathway"/>
</dbReference>
<dbReference type="GO" id="GO:0019353">
    <property type="term" value="P:protoporphyrinogen IX biosynthetic process from glutamate"/>
    <property type="evidence" value="ECO:0007669"/>
    <property type="project" value="TreeGrafter"/>
</dbReference>
<dbReference type="CDD" id="cd05213">
    <property type="entry name" value="NAD_bind_Glutamyl_tRNA_reduct"/>
    <property type="match status" value="1"/>
</dbReference>
<dbReference type="FunFam" id="3.30.460.30:FF:000001">
    <property type="entry name" value="Glutamyl-tRNA reductase"/>
    <property type="match status" value="1"/>
</dbReference>
<dbReference type="FunFam" id="3.40.50.720:FF:000031">
    <property type="entry name" value="Glutamyl-tRNA reductase"/>
    <property type="match status" value="1"/>
</dbReference>
<dbReference type="Gene3D" id="3.30.460.30">
    <property type="entry name" value="Glutamyl-tRNA reductase, N-terminal domain"/>
    <property type="match status" value="1"/>
</dbReference>
<dbReference type="Gene3D" id="3.40.50.720">
    <property type="entry name" value="NAD(P)-binding Rossmann-like Domain"/>
    <property type="match status" value="1"/>
</dbReference>
<dbReference type="HAMAP" id="MF_00087">
    <property type="entry name" value="Glu_tRNA_reductase"/>
    <property type="match status" value="1"/>
</dbReference>
<dbReference type="InterPro" id="IPR000343">
    <property type="entry name" value="4pyrrol_synth_GluRdtase"/>
</dbReference>
<dbReference type="InterPro" id="IPR015896">
    <property type="entry name" value="4pyrrol_synth_GluRdtase_dimer"/>
</dbReference>
<dbReference type="InterPro" id="IPR015895">
    <property type="entry name" value="4pyrrol_synth_GluRdtase_N"/>
</dbReference>
<dbReference type="InterPro" id="IPR018214">
    <property type="entry name" value="GluRdtase_CS"/>
</dbReference>
<dbReference type="InterPro" id="IPR036453">
    <property type="entry name" value="GluRdtase_dimer_dom_sf"/>
</dbReference>
<dbReference type="InterPro" id="IPR036343">
    <property type="entry name" value="GluRdtase_N_sf"/>
</dbReference>
<dbReference type="InterPro" id="IPR036291">
    <property type="entry name" value="NAD(P)-bd_dom_sf"/>
</dbReference>
<dbReference type="InterPro" id="IPR006151">
    <property type="entry name" value="Shikm_DH/Glu-tRNA_Rdtase"/>
</dbReference>
<dbReference type="NCBIfam" id="TIGR01035">
    <property type="entry name" value="hemA"/>
    <property type="match status" value="1"/>
</dbReference>
<dbReference type="PANTHER" id="PTHR43013">
    <property type="entry name" value="GLUTAMYL-TRNA REDUCTASE"/>
    <property type="match status" value="1"/>
</dbReference>
<dbReference type="PANTHER" id="PTHR43013:SF1">
    <property type="entry name" value="GLUTAMYL-TRNA REDUCTASE"/>
    <property type="match status" value="1"/>
</dbReference>
<dbReference type="Pfam" id="PF00745">
    <property type="entry name" value="GlutR_dimer"/>
    <property type="match status" value="1"/>
</dbReference>
<dbReference type="Pfam" id="PF05201">
    <property type="entry name" value="GlutR_N"/>
    <property type="match status" value="1"/>
</dbReference>
<dbReference type="Pfam" id="PF01488">
    <property type="entry name" value="Shikimate_DH"/>
    <property type="match status" value="1"/>
</dbReference>
<dbReference type="PIRSF" id="PIRSF000445">
    <property type="entry name" value="4pyrrol_synth_GluRdtase"/>
    <property type="match status" value="1"/>
</dbReference>
<dbReference type="SUPFAM" id="SSF69742">
    <property type="entry name" value="Glutamyl tRNA-reductase catalytic, N-terminal domain"/>
    <property type="match status" value="1"/>
</dbReference>
<dbReference type="SUPFAM" id="SSF69075">
    <property type="entry name" value="Glutamyl tRNA-reductase dimerization domain"/>
    <property type="match status" value="1"/>
</dbReference>
<dbReference type="SUPFAM" id="SSF51735">
    <property type="entry name" value="NAD(P)-binding Rossmann-fold domains"/>
    <property type="match status" value="1"/>
</dbReference>
<dbReference type="PROSITE" id="PS00747">
    <property type="entry name" value="GLUTR"/>
    <property type="match status" value="1"/>
</dbReference>
<accession>Q3AQF4</accession>
<organism>
    <name type="scientific">Chlorobium chlorochromatii (strain CaD3)</name>
    <dbReference type="NCBI Taxonomy" id="340177"/>
    <lineage>
        <taxon>Bacteria</taxon>
        <taxon>Pseudomonadati</taxon>
        <taxon>Chlorobiota</taxon>
        <taxon>Chlorobiia</taxon>
        <taxon>Chlorobiales</taxon>
        <taxon>Chlorobiaceae</taxon>
        <taxon>Chlorobium/Pelodictyon group</taxon>
        <taxon>Chlorobium</taxon>
    </lineage>
</organism>
<feature type="chain" id="PRO_1000004607" description="Glutamyl-tRNA reductase">
    <location>
        <begin position="1"/>
        <end position="426"/>
    </location>
</feature>
<feature type="active site" description="Nucleophile" evidence="1">
    <location>
        <position position="50"/>
    </location>
</feature>
<feature type="binding site" evidence="1">
    <location>
        <begin position="49"/>
        <end position="52"/>
    </location>
    <ligand>
        <name>substrate</name>
    </ligand>
</feature>
<feature type="binding site" evidence="1">
    <location>
        <position position="109"/>
    </location>
    <ligand>
        <name>substrate</name>
    </ligand>
</feature>
<feature type="binding site" evidence="1">
    <location>
        <begin position="114"/>
        <end position="116"/>
    </location>
    <ligand>
        <name>substrate</name>
    </ligand>
</feature>
<feature type="binding site" evidence="1">
    <location>
        <position position="120"/>
    </location>
    <ligand>
        <name>substrate</name>
    </ligand>
</feature>
<feature type="binding site" evidence="1">
    <location>
        <begin position="189"/>
        <end position="194"/>
    </location>
    <ligand>
        <name>NADP(+)</name>
        <dbReference type="ChEBI" id="CHEBI:58349"/>
    </ligand>
</feature>
<feature type="site" description="Important for activity" evidence="1">
    <location>
        <position position="99"/>
    </location>
</feature>
<keyword id="KW-0149">Chlorophyll biosynthesis</keyword>
<keyword id="KW-0521">NADP</keyword>
<keyword id="KW-0560">Oxidoreductase</keyword>
<keyword id="KW-0627">Porphyrin biosynthesis</keyword>
<gene>
    <name evidence="1" type="primary">hemA</name>
    <name type="ordered locus">Cag_1516</name>
</gene>
<proteinExistence type="inferred from homology"/>
<sequence>MNIISVGVNHKTAPIEIRERISLSEVQNKEFITGLVSSGLAHEAMVLSTCNRTELYVVPAMHEVTGEFLKEYLISYRDARKEVRPEHFFSRFYCSTARHLFEVASAIDSLVLGEGQILGQVKNAYRIAAEAQCAGIMITRLCHTAFSVAKKVKTKTRIMEGAVSVSYAAVELAQKIFSNLSLKKVLLVGAGETGELAAKHMFAKNARNIVITNRTISKAEALAEELGTNQVLPYESYKEHLHEFDIIITAVSTKDYALTEADMQPAMARRKLKPVIILDLGLPRNVDPNISKLQNMFLKDIDDLKHIIDKNLEKRRRELPKVHAIIEEELIAFGQWINTLKVRPTIVDLQSKFIEIKEKELERYRYKVSEEELQRMEHLTDRILKKILHHPIKMLKAPIDTTDSIPSRVNLVRNVFDLEEPNQSHF</sequence>